<comment type="function">
    <text evidence="1">Heme-dependent dioxygenase that catalyzes the oxidative cleavage of the L-tryptophan (L-Trp) pyrrole ring and converts L-tryptophan to N-formyl-L-kynurenine. Catalyzes the oxidative cleavage of the indole moiety.</text>
</comment>
<comment type="catalytic activity">
    <reaction evidence="1">
        <text>L-tryptophan + O2 = N-formyl-L-kynurenine</text>
        <dbReference type="Rhea" id="RHEA:24536"/>
        <dbReference type="ChEBI" id="CHEBI:15379"/>
        <dbReference type="ChEBI" id="CHEBI:57912"/>
        <dbReference type="ChEBI" id="CHEBI:58629"/>
        <dbReference type="EC" id="1.13.11.11"/>
    </reaction>
</comment>
<comment type="cofactor">
    <cofactor evidence="1">
        <name>heme</name>
        <dbReference type="ChEBI" id="CHEBI:30413"/>
    </cofactor>
    <text evidence="1">Binds 1 heme group per subunit.</text>
</comment>
<comment type="pathway">
    <text evidence="1">Amino-acid degradation; L-tryptophan degradation via kynurenine pathway; L-kynurenine from L-tryptophan: step 1/2.</text>
</comment>
<comment type="pathway">
    <text evidence="1">Pigment biosynthesis; ommochrome biosynthesis.</text>
</comment>
<comment type="subunit">
    <text evidence="1">Homotetramer. Dimer of dimers.</text>
</comment>
<comment type="similarity">
    <text evidence="1">Belongs to the tryptophan 2,3-dioxygenase family.</text>
</comment>
<gene>
    <name type="ORF">AGAP002721</name>
</gene>
<proteinExistence type="evidence at transcript level"/>
<protein>
    <recommendedName>
        <fullName evidence="1">Tryptophan 2,3-dioxygenase</fullName>
        <shortName evidence="1">TDO</shortName>
        <ecNumber evidence="1">1.13.11.11</ecNumber>
    </recommendedName>
    <alternativeName>
        <fullName evidence="1">Tryptamin 2,3-dioxygenase</fullName>
    </alternativeName>
    <alternativeName>
        <fullName evidence="1">Tryptophan oxygenase</fullName>
        <shortName evidence="1">TO</shortName>
        <shortName evidence="1">TRPO</shortName>
    </alternativeName>
    <alternativeName>
        <fullName evidence="1">Tryptophan pyrrolase</fullName>
    </alternativeName>
    <alternativeName>
        <fullName evidence="1">Tryptophanase</fullName>
    </alternativeName>
</protein>
<feature type="chain" id="PRO_0000360078" description="Tryptophan 2,3-dioxygenase">
    <location>
        <begin position="1"/>
        <end position="392"/>
    </location>
</feature>
<feature type="binding site" evidence="1">
    <location>
        <begin position="57"/>
        <end position="61"/>
    </location>
    <ligand>
        <name>substrate</name>
    </ligand>
</feature>
<feature type="binding site" evidence="1">
    <location>
        <position position="128"/>
    </location>
    <ligand>
        <name>substrate</name>
    </ligand>
</feature>
<feature type="binding site" description="axial binding residue" evidence="1">
    <location>
        <position position="313"/>
    </location>
    <ligand>
        <name>heme</name>
        <dbReference type="ChEBI" id="CHEBI:30413"/>
    </ligand>
    <ligandPart>
        <name>Fe</name>
        <dbReference type="ChEBI" id="CHEBI:18248"/>
    </ligandPart>
</feature>
<feature type="binding site" evidence="1">
    <location>
        <position position="328"/>
    </location>
    <ligand>
        <name>substrate</name>
    </ligand>
</feature>
<accession>O77457</accession>
<accession>Q7QCN1</accession>
<sequence length="392" mass="45402">MSCPMRSGFVDSVQGGHHLGSEAGMLYGEYLMLDKVLSAQRMLSVEGKKPVHDEHLFIVTHQAYELWFKQIIFELDSIRDLFSTEHIEESRTLEILKRLNRIVMILKLLVDQVPILETMTPLDFMDFRDYLSPASGFQSLQFRLLENKLGVKSEHRVKYNQKYTEVFASDPGAIERIGTTETEPSLADLVQKWLERTPGLEQDGFNFWGKFQESVEQLLAEQEASAMSEEHENVREYRLMDIDKRREVYKSIFDAQVHDALVARGERRFTHKALQGAIMITFYRDEPRFSQPHQLLMLLMDIDSLITKWRYNHVIMVQRMIGSQQLGTGGSSGYQYLRSTLSDRYKVFLDLFNLSTFLIPRQSIPPLTNEMQKALNLAWGSPAHFARNGSLH</sequence>
<dbReference type="EC" id="1.13.11.11" evidence="1"/>
<dbReference type="EMBL" id="L76432">
    <property type="protein sequence ID" value="AAC27663.1"/>
    <property type="molecule type" value="mRNA"/>
</dbReference>
<dbReference type="EMBL" id="L76433">
    <property type="protein sequence ID" value="AAC27659.1"/>
    <property type="molecule type" value="Genomic_DNA"/>
</dbReference>
<dbReference type="EMBL" id="AAAB01008859">
    <property type="protein sequence ID" value="EAA08131.2"/>
    <property type="molecule type" value="Genomic_DNA"/>
</dbReference>
<dbReference type="SMR" id="O77457"/>
<dbReference type="FunCoup" id="O77457">
    <property type="interactions" value="144"/>
</dbReference>
<dbReference type="STRING" id="7165.O77457"/>
<dbReference type="PaxDb" id="7165-AGAP002721-PA"/>
<dbReference type="EnsemblMetazoa" id="AGAP002721-RA">
    <property type="protein sequence ID" value="AGAP002721-PA"/>
    <property type="gene ID" value="AGAP002721"/>
</dbReference>
<dbReference type="GeneID" id="1273245"/>
<dbReference type="KEGG" id="aga:1273245"/>
<dbReference type="CTD" id="136040130"/>
<dbReference type="VEuPathDB" id="VectorBase:AGAMI1_013840"/>
<dbReference type="VEuPathDB" id="VectorBase:AGAP002721"/>
<dbReference type="eggNOG" id="KOG3906">
    <property type="taxonomic scope" value="Eukaryota"/>
</dbReference>
<dbReference type="HOGENOM" id="CLU_045599_1_1_1"/>
<dbReference type="InParanoid" id="O77457"/>
<dbReference type="OMA" id="WRWRNDH"/>
<dbReference type="OrthoDB" id="447477at2759"/>
<dbReference type="PhylomeDB" id="O77457"/>
<dbReference type="UniPathway" id="UPA00271"/>
<dbReference type="UniPathway" id="UPA00333">
    <property type="reaction ID" value="UER00453"/>
</dbReference>
<dbReference type="Proteomes" id="UP000007062">
    <property type="component" value="Chromosome 2R"/>
</dbReference>
<dbReference type="GO" id="GO:0020037">
    <property type="term" value="F:heme binding"/>
    <property type="evidence" value="ECO:0000250"/>
    <property type="project" value="UniProtKB"/>
</dbReference>
<dbReference type="GO" id="GO:0046872">
    <property type="term" value="F:metal ion binding"/>
    <property type="evidence" value="ECO:0007669"/>
    <property type="project" value="UniProtKB-KW"/>
</dbReference>
<dbReference type="GO" id="GO:0004833">
    <property type="term" value="F:tryptophan 2,3-dioxygenase activity"/>
    <property type="evidence" value="ECO:0000250"/>
    <property type="project" value="UniProtKB"/>
</dbReference>
<dbReference type="GO" id="GO:0019442">
    <property type="term" value="P:L-tryptophan catabolic process to acetyl-CoA"/>
    <property type="evidence" value="ECO:0000318"/>
    <property type="project" value="GO_Central"/>
</dbReference>
<dbReference type="GO" id="GO:0019441">
    <property type="term" value="P:L-tryptophan catabolic process to kynurenine"/>
    <property type="evidence" value="ECO:0000250"/>
    <property type="project" value="UniProtKB"/>
</dbReference>
<dbReference type="GO" id="GO:0006727">
    <property type="term" value="P:ommochrome biosynthetic process"/>
    <property type="evidence" value="ECO:0007669"/>
    <property type="project" value="UniProtKB-UniRule"/>
</dbReference>
<dbReference type="FunFam" id="1.10.287.3810:FF:000001">
    <property type="entry name" value="Tryptophan 2,3-dioxygenase"/>
    <property type="match status" value="1"/>
</dbReference>
<dbReference type="Gene3D" id="1.10.287.3810">
    <property type="match status" value="1"/>
</dbReference>
<dbReference type="Gene3D" id="1.20.58.480">
    <property type="match status" value="1"/>
</dbReference>
<dbReference type="HAMAP" id="MF_01972">
    <property type="entry name" value="T23O"/>
    <property type="match status" value="1"/>
</dbReference>
<dbReference type="InterPro" id="IPR037217">
    <property type="entry name" value="Trp/Indoleamine_2_3_dOase-like"/>
</dbReference>
<dbReference type="InterPro" id="IPR004981">
    <property type="entry name" value="Trp_2_3_dOase"/>
</dbReference>
<dbReference type="PANTHER" id="PTHR10138">
    <property type="entry name" value="TRYPTOPHAN 2,3-DIOXYGENASE"/>
    <property type="match status" value="1"/>
</dbReference>
<dbReference type="PANTHER" id="PTHR10138:SF0">
    <property type="entry name" value="TRYPTOPHAN 2,3-DIOXYGENASE"/>
    <property type="match status" value="1"/>
</dbReference>
<dbReference type="Pfam" id="PF03301">
    <property type="entry name" value="Trp_dioxygenase"/>
    <property type="match status" value="1"/>
</dbReference>
<dbReference type="SUPFAM" id="SSF140959">
    <property type="entry name" value="Indolic compounds 2,3-dioxygenase-like"/>
    <property type="match status" value="1"/>
</dbReference>
<name>T23O_ANOGA</name>
<evidence type="ECO:0000255" key="1">
    <source>
        <dbReference type="HAMAP-Rule" id="MF_03020"/>
    </source>
</evidence>
<keyword id="KW-0223">Dioxygenase</keyword>
<keyword id="KW-0349">Heme</keyword>
<keyword id="KW-0408">Iron</keyword>
<keyword id="KW-0479">Metal-binding</keyword>
<keyword id="KW-0560">Oxidoreductase</keyword>
<keyword id="KW-1185">Reference proteome</keyword>
<keyword id="KW-0823">Tryptophan catabolism</keyword>
<organism>
    <name type="scientific">Anopheles gambiae</name>
    <name type="common">African malaria mosquito</name>
    <dbReference type="NCBI Taxonomy" id="7165"/>
    <lineage>
        <taxon>Eukaryota</taxon>
        <taxon>Metazoa</taxon>
        <taxon>Ecdysozoa</taxon>
        <taxon>Arthropoda</taxon>
        <taxon>Hexapoda</taxon>
        <taxon>Insecta</taxon>
        <taxon>Pterygota</taxon>
        <taxon>Neoptera</taxon>
        <taxon>Endopterygota</taxon>
        <taxon>Diptera</taxon>
        <taxon>Nematocera</taxon>
        <taxon>Culicoidea</taxon>
        <taxon>Culicidae</taxon>
        <taxon>Anophelinae</taxon>
        <taxon>Anopheles</taxon>
    </lineage>
</organism>
<reference key="1">
    <citation type="journal article" date="1996" name="Insect Biochem. Mol. Biol.">
        <title>The tryptophan oxygenase gene of Anopheles gambiae.</title>
        <authorList>
            <person name="Mukabayire O."/>
            <person name="Cornel A.J."/>
            <person name="Dotson E.M."/>
            <person name="Collins F.H."/>
            <person name="Besansky N.J."/>
        </authorList>
    </citation>
    <scope>NUCLEOTIDE SEQUENCE [MRNA]</scope>
</reference>
<reference key="2">
    <citation type="journal article" date="2002" name="Science">
        <title>The genome sequence of the malaria mosquito Anopheles gambiae.</title>
        <authorList>
            <person name="Holt R.A."/>
            <person name="Subramanian G.M."/>
            <person name="Halpern A."/>
            <person name="Sutton G.G."/>
            <person name="Charlab R."/>
            <person name="Nusskern D.R."/>
            <person name="Wincker P."/>
            <person name="Clark A.G."/>
            <person name="Ribeiro J.M.C."/>
            <person name="Wides R."/>
            <person name="Salzberg S.L."/>
            <person name="Loftus B.J."/>
            <person name="Yandell M.D."/>
            <person name="Majoros W.H."/>
            <person name="Rusch D.B."/>
            <person name="Lai Z."/>
            <person name="Kraft C.L."/>
            <person name="Abril J.F."/>
            <person name="Anthouard V."/>
            <person name="Arensburger P."/>
            <person name="Atkinson P.W."/>
            <person name="Baden H."/>
            <person name="de Berardinis V."/>
            <person name="Baldwin D."/>
            <person name="Benes V."/>
            <person name="Biedler J."/>
            <person name="Blass C."/>
            <person name="Bolanos R."/>
            <person name="Boscus D."/>
            <person name="Barnstead M."/>
            <person name="Cai S."/>
            <person name="Center A."/>
            <person name="Chaturverdi K."/>
            <person name="Christophides G.K."/>
            <person name="Chrystal M.A.M."/>
            <person name="Clamp M."/>
            <person name="Cravchik A."/>
            <person name="Curwen V."/>
            <person name="Dana A."/>
            <person name="Delcher A."/>
            <person name="Dew I."/>
            <person name="Evans C.A."/>
            <person name="Flanigan M."/>
            <person name="Grundschober-Freimoser A."/>
            <person name="Friedli L."/>
            <person name="Gu Z."/>
            <person name="Guan P."/>
            <person name="Guigo R."/>
            <person name="Hillenmeyer M.E."/>
            <person name="Hladun S.L."/>
            <person name="Hogan J.R."/>
            <person name="Hong Y.S."/>
            <person name="Hoover J."/>
            <person name="Jaillon O."/>
            <person name="Ke Z."/>
            <person name="Kodira C.D."/>
            <person name="Kokoza E."/>
            <person name="Koutsos A."/>
            <person name="Letunic I."/>
            <person name="Levitsky A.A."/>
            <person name="Liang Y."/>
            <person name="Lin J.-J."/>
            <person name="Lobo N.F."/>
            <person name="Lopez J.R."/>
            <person name="Malek J.A."/>
            <person name="McIntosh T.C."/>
            <person name="Meister S."/>
            <person name="Miller J.R."/>
            <person name="Mobarry C."/>
            <person name="Mongin E."/>
            <person name="Murphy S.D."/>
            <person name="O'Brochta D.A."/>
            <person name="Pfannkoch C."/>
            <person name="Qi R."/>
            <person name="Regier M.A."/>
            <person name="Remington K."/>
            <person name="Shao H."/>
            <person name="Sharakhova M.V."/>
            <person name="Sitter C.D."/>
            <person name="Shetty J."/>
            <person name="Smith T.J."/>
            <person name="Strong R."/>
            <person name="Sun J."/>
            <person name="Thomasova D."/>
            <person name="Ton L.Q."/>
            <person name="Topalis P."/>
            <person name="Tu Z.J."/>
            <person name="Unger M.F."/>
            <person name="Walenz B."/>
            <person name="Wang A.H."/>
            <person name="Wang J."/>
            <person name="Wang M."/>
            <person name="Wang X."/>
            <person name="Woodford K.J."/>
            <person name="Wortman J.R."/>
            <person name="Wu M."/>
            <person name="Yao A."/>
            <person name="Zdobnov E.M."/>
            <person name="Zhang H."/>
            <person name="Zhao Q."/>
            <person name="Zhao S."/>
            <person name="Zhu S.C."/>
            <person name="Zhimulev I."/>
            <person name="Coluzzi M."/>
            <person name="della Torre A."/>
            <person name="Roth C.W."/>
            <person name="Louis C."/>
            <person name="Kalush F."/>
            <person name="Mural R.J."/>
            <person name="Myers E.W."/>
            <person name="Adams M.D."/>
            <person name="Smith H.O."/>
            <person name="Broder S."/>
            <person name="Gardner M.J."/>
            <person name="Fraser C.M."/>
            <person name="Birney E."/>
            <person name="Bork P."/>
            <person name="Brey P.T."/>
            <person name="Venter J.C."/>
            <person name="Weissenbach J."/>
            <person name="Kafatos F.C."/>
            <person name="Collins F.H."/>
            <person name="Hoffman S.L."/>
        </authorList>
    </citation>
    <scope>NUCLEOTIDE SEQUENCE [LARGE SCALE GENOMIC DNA]</scope>
    <source>
        <strain>PEST</strain>
    </source>
</reference>